<comment type="function">
    <text evidence="1">Required for rescue of stalled ribosomes mediated by trans-translation. Binds to transfer-messenger RNA (tmRNA), required for stable association of tmRNA with ribosomes. tmRNA and SmpB together mimic tRNA shape, replacing the anticodon stem-loop with SmpB. tmRNA is encoded by the ssrA gene; the 2 termini fold to resemble tRNA(Ala) and it encodes a 'tag peptide', a short internal open reading frame. During trans-translation Ala-aminoacylated tmRNA acts like a tRNA, entering the A-site of stalled ribosomes, displacing the stalled mRNA. The ribosome then switches to translate the ORF on the tmRNA; the nascent peptide is terminated with the 'tag peptide' encoded by the tmRNA and targeted for degradation. The ribosome is freed to recommence translation, which seems to be the essential function of trans-translation.</text>
</comment>
<comment type="subcellular location">
    <subcellularLocation>
        <location evidence="1">Cytoplasm</location>
    </subcellularLocation>
    <text evidence="1">The tmRNA-SmpB complex associates with stalled 70S ribosomes.</text>
</comment>
<comment type="similarity">
    <text evidence="1">Belongs to the SmpB family.</text>
</comment>
<protein>
    <recommendedName>
        <fullName evidence="1">SsrA-binding protein</fullName>
    </recommendedName>
    <alternativeName>
        <fullName evidence="1">Small protein B</fullName>
    </alternativeName>
</protein>
<gene>
    <name evidence="1" type="primary">smpB</name>
    <name type="ordered locus">Clos_0978</name>
</gene>
<reference key="1">
    <citation type="submission" date="2007-10" db="EMBL/GenBank/DDBJ databases">
        <title>Complete genome of Alkaliphilus oremlandii OhILAs.</title>
        <authorList>
            <person name="Copeland A."/>
            <person name="Lucas S."/>
            <person name="Lapidus A."/>
            <person name="Barry K."/>
            <person name="Detter J.C."/>
            <person name="Glavina del Rio T."/>
            <person name="Hammon N."/>
            <person name="Israni S."/>
            <person name="Dalin E."/>
            <person name="Tice H."/>
            <person name="Pitluck S."/>
            <person name="Chain P."/>
            <person name="Malfatti S."/>
            <person name="Shin M."/>
            <person name="Vergez L."/>
            <person name="Schmutz J."/>
            <person name="Larimer F."/>
            <person name="Land M."/>
            <person name="Hauser L."/>
            <person name="Kyrpides N."/>
            <person name="Mikhailova N."/>
            <person name="Stolz J.F."/>
            <person name="Dawson A."/>
            <person name="Fisher E."/>
            <person name="Crable B."/>
            <person name="Perera E."/>
            <person name="Lisak J."/>
            <person name="Ranganathan M."/>
            <person name="Basu P."/>
            <person name="Richardson P."/>
        </authorList>
    </citation>
    <scope>NUCLEOTIDE SEQUENCE [LARGE SCALE GENOMIC DNA]</scope>
    <source>
        <strain>OhILAs</strain>
    </source>
</reference>
<organism>
    <name type="scientific">Alkaliphilus oremlandii (strain OhILAs)</name>
    <name type="common">Clostridium oremlandii (strain OhILAs)</name>
    <dbReference type="NCBI Taxonomy" id="350688"/>
    <lineage>
        <taxon>Bacteria</taxon>
        <taxon>Bacillati</taxon>
        <taxon>Bacillota</taxon>
        <taxon>Clostridia</taxon>
        <taxon>Peptostreptococcales</taxon>
        <taxon>Natronincolaceae</taxon>
        <taxon>Alkaliphilus</taxon>
    </lineage>
</organism>
<evidence type="ECO:0000255" key="1">
    <source>
        <dbReference type="HAMAP-Rule" id="MF_00023"/>
    </source>
</evidence>
<proteinExistence type="inferred from homology"/>
<sequence>MASKGTKLIATNKKARHDYFIEETFETGIVLVGTEVKSIRQGKLNIKDGYARVENSEVFLYNVHISPYEQGNIFNKDPLRVRKLLLHKSEIRKLIGYVQQKGYTLIPLSFYLKDGLIKVELGIGVGKKIYDKRQDIAKKDAARRIDKELRQREKQ</sequence>
<dbReference type="EMBL" id="CP000853">
    <property type="protein sequence ID" value="ABW18525.1"/>
    <property type="molecule type" value="Genomic_DNA"/>
</dbReference>
<dbReference type="RefSeq" id="WP_012158837.1">
    <property type="nucleotide sequence ID" value="NC_009922.1"/>
</dbReference>
<dbReference type="SMR" id="A8MFY7"/>
<dbReference type="STRING" id="350688.Clos_0978"/>
<dbReference type="KEGG" id="aoe:Clos_0978"/>
<dbReference type="eggNOG" id="COG0691">
    <property type="taxonomic scope" value="Bacteria"/>
</dbReference>
<dbReference type="HOGENOM" id="CLU_108953_0_0_9"/>
<dbReference type="OrthoDB" id="9805462at2"/>
<dbReference type="Proteomes" id="UP000000269">
    <property type="component" value="Chromosome"/>
</dbReference>
<dbReference type="GO" id="GO:0005829">
    <property type="term" value="C:cytosol"/>
    <property type="evidence" value="ECO:0007669"/>
    <property type="project" value="TreeGrafter"/>
</dbReference>
<dbReference type="GO" id="GO:0003723">
    <property type="term" value="F:RNA binding"/>
    <property type="evidence" value="ECO:0007669"/>
    <property type="project" value="UniProtKB-UniRule"/>
</dbReference>
<dbReference type="GO" id="GO:0070929">
    <property type="term" value="P:trans-translation"/>
    <property type="evidence" value="ECO:0007669"/>
    <property type="project" value="UniProtKB-UniRule"/>
</dbReference>
<dbReference type="CDD" id="cd09294">
    <property type="entry name" value="SmpB"/>
    <property type="match status" value="1"/>
</dbReference>
<dbReference type="Gene3D" id="2.40.280.10">
    <property type="match status" value="1"/>
</dbReference>
<dbReference type="HAMAP" id="MF_00023">
    <property type="entry name" value="SmpB"/>
    <property type="match status" value="1"/>
</dbReference>
<dbReference type="InterPro" id="IPR023620">
    <property type="entry name" value="SmpB"/>
</dbReference>
<dbReference type="InterPro" id="IPR000037">
    <property type="entry name" value="SsrA-bd_prot"/>
</dbReference>
<dbReference type="InterPro" id="IPR020081">
    <property type="entry name" value="SsrA-bd_prot_CS"/>
</dbReference>
<dbReference type="NCBIfam" id="NF003843">
    <property type="entry name" value="PRK05422.1"/>
    <property type="match status" value="1"/>
</dbReference>
<dbReference type="NCBIfam" id="TIGR00086">
    <property type="entry name" value="smpB"/>
    <property type="match status" value="1"/>
</dbReference>
<dbReference type="PANTHER" id="PTHR30308:SF2">
    <property type="entry name" value="SSRA-BINDING PROTEIN"/>
    <property type="match status" value="1"/>
</dbReference>
<dbReference type="PANTHER" id="PTHR30308">
    <property type="entry name" value="TMRNA-BINDING COMPONENT OF TRANS-TRANSLATION TAGGING COMPLEX"/>
    <property type="match status" value="1"/>
</dbReference>
<dbReference type="Pfam" id="PF01668">
    <property type="entry name" value="SmpB"/>
    <property type="match status" value="1"/>
</dbReference>
<dbReference type="SUPFAM" id="SSF74982">
    <property type="entry name" value="Small protein B (SmpB)"/>
    <property type="match status" value="1"/>
</dbReference>
<dbReference type="PROSITE" id="PS01317">
    <property type="entry name" value="SSRP"/>
    <property type="match status" value="1"/>
</dbReference>
<keyword id="KW-0963">Cytoplasm</keyword>
<keyword id="KW-1185">Reference proteome</keyword>
<keyword id="KW-0694">RNA-binding</keyword>
<feature type="chain" id="PRO_0000331020" description="SsrA-binding protein">
    <location>
        <begin position="1"/>
        <end position="155"/>
    </location>
</feature>
<name>SSRP_ALKOO</name>
<accession>A8MFY7</accession>